<organism>
    <name type="scientific">Wolinella succinogenes (strain ATCC 29543 / DSM 1740 / CCUG 13145 / JCM 31913 / LMG 7466 / NCTC 11488 / FDC 602W)</name>
    <name type="common">Vibrio succinogenes</name>
    <dbReference type="NCBI Taxonomy" id="273121"/>
    <lineage>
        <taxon>Bacteria</taxon>
        <taxon>Pseudomonadati</taxon>
        <taxon>Campylobacterota</taxon>
        <taxon>Epsilonproteobacteria</taxon>
        <taxon>Campylobacterales</taxon>
        <taxon>Helicobacteraceae</taxon>
        <taxon>Wolinella</taxon>
    </lineage>
</organism>
<dbReference type="EC" id="6.5.1.2" evidence="1"/>
<dbReference type="EMBL" id="BX571661">
    <property type="protein sequence ID" value="CAE10810.1"/>
    <property type="molecule type" value="Genomic_DNA"/>
</dbReference>
<dbReference type="RefSeq" id="WP_011139593.1">
    <property type="nucleotide sequence ID" value="NC_005090.1"/>
</dbReference>
<dbReference type="SMR" id="Q7M8A0"/>
<dbReference type="STRING" id="273121.WS1790"/>
<dbReference type="KEGG" id="wsu:WS1790"/>
<dbReference type="eggNOG" id="COG0272">
    <property type="taxonomic scope" value="Bacteria"/>
</dbReference>
<dbReference type="HOGENOM" id="CLU_007764_2_1_7"/>
<dbReference type="Proteomes" id="UP000000422">
    <property type="component" value="Chromosome"/>
</dbReference>
<dbReference type="GO" id="GO:0005829">
    <property type="term" value="C:cytosol"/>
    <property type="evidence" value="ECO:0007669"/>
    <property type="project" value="TreeGrafter"/>
</dbReference>
<dbReference type="GO" id="GO:0003677">
    <property type="term" value="F:DNA binding"/>
    <property type="evidence" value="ECO:0007669"/>
    <property type="project" value="InterPro"/>
</dbReference>
<dbReference type="GO" id="GO:0003911">
    <property type="term" value="F:DNA ligase (NAD+) activity"/>
    <property type="evidence" value="ECO:0007669"/>
    <property type="project" value="UniProtKB-UniRule"/>
</dbReference>
<dbReference type="GO" id="GO:0046872">
    <property type="term" value="F:metal ion binding"/>
    <property type="evidence" value="ECO:0007669"/>
    <property type="project" value="UniProtKB-KW"/>
</dbReference>
<dbReference type="GO" id="GO:0006281">
    <property type="term" value="P:DNA repair"/>
    <property type="evidence" value="ECO:0007669"/>
    <property type="project" value="UniProtKB-KW"/>
</dbReference>
<dbReference type="GO" id="GO:0006260">
    <property type="term" value="P:DNA replication"/>
    <property type="evidence" value="ECO:0007669"/>
    <property type="project" value="UniProtKB-KW"/>
</dbReference>
<dbReference type="CDD" id="cd17748">
    <property type="entry name" value="BRCT_DNA_ligase_like"/>
    <property type="match status" value="1"/>
</dbReference>
<dbReference type="CDD" id="cd00114">
    <property type="entry name" value="LIGANc"/>
    <property type="match status" value="1"/>
</dbReference>
<dbReference type="FunFam" id="1.10.150.20:FF:000007">
    <property type="entry name" value="DNA ligase"/>
    <property type="match status" value="1"/>
</dbReference>
<dbReference type="FunFam" id="2.40.50.140:FF:000012">
    <property type="entry name" value="DNA ligase"/>
    <property type="match status" value="1"/>
</dbReference>
<dbReference type="Gene3D" id="6.20.10.30">
    <property type="match status" value="1"/>
</dbReference>
<dbReference type="Gene3D" id="1.10.150.20">
    <property type="entry name" value="5' to 3' exonuclease, C-terminal subdomain"/>
    <property type="match status" value="2"/>
</dbReference>
<dbReference type="Gene3D" id="3.40.50.10190">
    <property type="entry name" value="BRCT domain"/>
    <property type="match status" value="1"/>
</dbReference>
<dbReference type="Gene3D" id="3.30.470.30">
    <property type="entry name" value="DNA ligase/mRNA capping enzyme"/>
    <property type="match status" value="1"/>
</dbReference>
<dbReference type="Gene3D" id="1.10.287.610">
    <property type="entry name" value="Helix hairpin bin"/>
    <property type="match status" value="1"/>
</dbReference>
<dbReference type="Gene3D" id="2.40.50.140">
    <property type="entry name" value="Nucleic acid-binding proteins"/>
    <property type="match status" value="1"/>
</dbReference>
<dbReference type="HAMAP" id="MF_01588">
    <property type="entry name" value="DNA_ligase_A"/>
    <property type="match status" value="1"/>
</dbReference>
<dbReference type="InterPro" id="IPR001357">
    <property type="entry name" value="BRCT_dom"/>
</dbReference>
<dbReference type="InterPro" id="IPR036420">
    <property type="entry name" value="BRCT_dom_sf"/>
</dbReference>
<dbReference type="InterPro" id="IPR041663">
    <property type="entry name" value="DisA/LigA_HHH"/>
</dbReference>
<dbReference type="InterPro" id="IPR001679">
    <property type="entry name" value="DNA_ligase"/>
</dbReference>
<dbReference type="InterPro" id="IPR018239">
    <property type="entry name" value="DNA_ligase_AS"/>
</dbReference>
<dbReference type="InterPro" id="IPR033136">
    <property type="entry name" value="DNA_ligase_CS"/>
</dbReference>
<dbReference type="InterPro" id="IPR013839">
    <property type="entry name" value="DNAligase_adenylation"/>
</dbReference>
<dbReference type="InterPro" id="IPR013840">
    <property type="entry name" value="DNAligase_N"/>
</dbReference>
<dbReference type="InterPro" id="IPR003583">
    <property type="entry name" value="Hlx-hairpin-Hlx_DNA-bd_motif"/>
</dbReference>
<dbReference type="InterPro" id="IPR012340">
    <property type="entry name" value="NA-bd_OB-fold"/>
</dbReference>
<dbReference type="InterPro" id="IPR004150">
    <property type="entry name" value="NAD_DNA_ligase_OB"/>
</dbReference>
<dbReference type="InterPro" id="IPR010994">
    <property type="entry name" value="RuvA_2-like"/>
</dbReference>
<dbReference type="InterPro" id="IPR004149">
    <property type="entry name" value="Znf_DNAligase_C4"/>
</dbReference>
<dbReference type="NCBIfam" id="TIGR00575">
    <property type="entry name" value="dnlj"/>
    <property type="match status" value="1"/>
</dbReference>
<dbReference type="NCBIfam" id="NF005932">
    <property type="entry name" value="PRK07956.1"/>
    <property type="match status" value="1"/>
</dbReference>
<dbReference type="PANTHER" id="PTHR23389">
    <property type="entry name" value="CHROMOSOME TRANSMISSION FIDELITY FACTOR 18"/>
    <property type="match status" value="1"/>
</dbReference>
<dbReference type="PANTHER" id="PTHR23389:SF9">
    <property type="entry name" value="DNA LIGASE"/>
    <property type="match status" value="1"/>
</dbReference>
<dbReference type="Pfam" id="PF00533">
    <property type="entry name" value="BRCT"/>
    <property type="match status" value="1"/>
</dbReference>
<dbReference type="Pfam" id="PF01653">
    <property type="entry name" value="DNA_ligase_aden"/>
    <property type="match status" value="1"/>
</dbReference>
<dbReference type="Pfam" id="PF03120">
    <property type="entry name" value="DNA_ligase_OB"/>
    <property type="match status" value="1"/>
</dbReference>
<dbReference type="Pfam" id="PF03119">
    <property type="entry name" value="DNA_ligase_ZBD"/>
    <property type="match status" value="1"/>
</dbReference>
<dbReference type="Pfam" id="PF12826">
    <property type="entry name" value="HHH_2"/>
    <property type="match status" value="1"/>
</dbReference>
<dbReference type="Pfam" id="PF14520">
    <property type="entry name" value="HHH_5"/>
    <property type="match status" value="1"/>
</dbReference>
<dbReference type="PIRSF" id="PIRSF001604">
    <property type="entry name" value="LigA"/>
    <property type="match status" value="1"/>
</dbReference>
<dbReference type="SMART" id="SM00292">
    <property type="entry name" value="BRCT"/>
    <property type="match status" value="1"/>
</dbReference>
<dbReference type="SMART" id="SM00278">
    <property type="entry name" value="HhH1"/>
    <property type="match status" value="4"/>
</dbReference>
<dbReference type="SMART" id="SM00532">
    <property type="entry name" value="LIGANc"/>
    <property type="match status" value="1"/>
</dbReference>
<dbReference type="SUPFAM" id="SSF52113">
    <property type="entry name" value="BRCT domain"/>
    <property type="match status" value="1"/>
</dbReference>
<dbReference type="SUPFAM" id="SSF56091">
    <property type="entry name" value="DNA ligase/mRNA capping enzyme, catalytic domain"/>
    <property type="match status" value="1"/>
</dbReference>
<dbReference type="SUPFAM" id="SSF50249">
    <property type="entry name" value="Nucleic acid-binding proteins"/>
    <property type="match status" value="1"/>
</dbReference>
<dbReference type="SUPFAM" id="SSF47781">
    <property type="entry name" value="RuvA domain 2-like"/>
    <property type="match status" value="1"/>
</dbReference>
<dbReference type="PROSITE" id="PS50172">
    <property type="entry name" value="BRCT"/>
    <property type="match status" value="1"/>
</dbReference>
<dbReference type="PROSITE" id="PS01055">
    <property type="entry name" value="DNA_LIGASE_N1"/>
    <property type="match status" value="1"/>
</dbReference>
<dbReference type="PROSITE" id="PS01056">
    <property type="entry name" value="DNA_LIGASE_N2"/>
    <property type="match status" value="1"/>
</dbReference>
<gene>
    <name evidence="1" type="primary">ligA</name>
    <name type="ordered locus">WS1790</name>
</gene>
<protein>
    <recommendedName>
        <fullName evidence="1">DNA ligase</fullName>
        <ecNumber evidence="1">6.5.1.2</ecNumber>
    </recommendedName>
    <alternativeName>
        <fullName evidence="1">Polydeoxyribonucleotide synthase [NAD(+)]</fullName>
    </alternativeName>
</protein>
<name>DNLJ_WOLSU</name>
<accession>Q7M8A0</accession>
<reference key="1">
    <citation type="journal article" date="2003" name="Proc. Natl. Acad. Sci. U.S.A.">
        <title>Complete genome sequence and analysis of Wolinella succinogenes.</title>
        <authorList>
            <person name="Baar C."/>
            <person name="Eppinger M."/>
            <person name="Raddatz G."/>
            <person name="Simon J."/>
            <person name="Lanz C."/>
            <person name="Klimmek O."/>
            <person name="Nandakumar R."/>
            <person name="Gross R."/>
            <person name="Rosinus A."/>
            <person name="Keller H."/>
            <person name="Jagtap P."/>
            <person name="Linke B."/>
            <person name="Meyer F."/>
            <person name="Lederer H."/>
            <person name="Schuster S.C."/>
        </authorList>
    </citation>
    <scope>NUCLEOTIDE SEQUENCE [LARGE SCALE GENOMIC DNA]</scope>
    <source>
        <strain>ATCC 29543 / DSM 1740 / CCUG 13145 / JCM 31913 / LMG 7466 / NCTC 11488 / FDC 602W</strain>
    </source>
</reference>
<evidence type="ECO:0000255" key="1">
    <source>
        <dbReference type="HAMAP-Rule" id="MF_01588"/>
    </source>
</evidence>
<sequence length="650" mass="72896">MNPDQYSQAIERLNAWAHAYYVLDAPLATDEEYDQLYHEALAFERQNPERIHPASPTQRIGGAPLEGFQKASHLERMWSLEDVFDFGELKSWAERLYKQFPHATFVCDPKFDGASLNLLYEEGRLVRAATRGDGLIGEDVTQNARTIPSIPLSIPLLERIEIRGEVVIPKEDFEKLQEERLRENESPFANPRNAAAGSLRQLDPAITAKRKLRFIPWGVGAHPFKTGSFFEIMKSLESYGFIRSPERTRCHNIHEIERVYALLVSERSTHPVMLDGMVVRVDEIAYQRELGYTIKAPRFACAYKFPAIEKKARLLSITLQVGRSGVVTPVANLEPVEIEGAMISRATLHNFDEIKRLDVREGDWVSLIRSGDVIPKIIQPFAHLRSGEEKPLSRPTHCPECGSELLVEEVLIKCQNLSCPARIKNSLIHFASKKALNIDGLGEKIIEQLFEAGLIKEFEDLFSLTKESLLSLEGFKEKKAQNLLDAIQGVRGCDLWRFINALGIEHIGEGAAKKLSHAFGLAFHLQNHEAIIGLEGFGEEMAQSLLEFCRVNHERIEHLLGLIEPLAPIQLTPQDSPIAGKSFVITGTLSAPREHFVELLTSLGAKVVSSVSKKSDFLLYGESAGSKLEKARELGVRCVNEEELGEILES</sequence>
<keyword id="KW-0227">DNA damage</keyword>
<keyword id="KW-0234">DNA repair</keyword>
<keyword id="KW-0235">DNA replication</keyword>
<keyword id="KW-0436">Ligase</keyword>
<keyword id="KW-0460">Magnesium</keyword>
<keyword id="KW-0464">Manganese</keyword>
<keyword id="KW-0479">Metal-binding</keyword>
<keyword id="KW-0520">NAD</keyword>
<keyword id="KW-1185">Reference proteome</keyword>
<keyword id="KW-0862">Zinc</keyword>
<comment type="function">
    <text evidence="1">DNA ligase that catalyzes the formation of phosphodiester linkages between 5'-phosphoryl and 3'-hydroxyl groups in double-stranded DNA using NAD as a coenzyme and as the energy source for the reaction. It is essential for DNA replication and repair of damaged DNA.</text>
</comment>
<comment type="catalytic activity">
    <reaction evidence="1">
        <text>NAD(+) + (deoxyribonucleotide)n-3'-hydroxyl + 5'-phospho-(deoxyribonucleotide)m = (deoxyribonucleotide)n+m + AMP + beta-nicotinamide D-nucleotide.</text>
        <dbReference type="EC" id="6.5.1.2"/>
    </reaction>
</comment>
<comment type="cofactor">
    <cofactor evidence="1">
        <name>Mg(2+)</name>
        <dbReference type="ChEBI" id="CHEBI:18420"/>
    </cofactor>
    <cofactor evidence="1">
        <name>Mn(2+)</name>
        <dbReference type="ChEBI" id="CHEBI:29035"/>
    </cofactor>
</comment>
<comment type="similarity">
    <text evidence="1">Belongs to the NAD-dependent DNA ligase family. LigA subfamily.</text>
</comment>
<feature type="chain" id="PRO_0000313513" description="DNA ligase">
    <location>
        <begin position="1"/>
        <end position="650"/>
    </location>
</feature>
<feature type="domain" description="BRCT" evidence="1">
    <location>
        <begin position="573"/>
        <end position="650"/>
    </location>
</feature>
<feature type="active site" description="N6-AMP-lysine intermediate" evidence="1">
    <location>
        <position position="110"/>
    </location>
</feature>
<feature type="binding site" evidence="1">
    <location>
        <begin position="30"/>
        <end position="34"/>
    </location>
    <ligand>
        <name>NAD(+)</name>
        <dbReference type="ChEBI" id="CHEBI:57540"/>
    </ligand>
</feature>
<feature type="binding site" evidence="1">
    <location>
        <begin position="79"/>
        <end position="80"/>
    </location>
    <ligand>
        <name>NAD(+)</name>
        <dbReference type="ChEBI" id="CHEBI:57540"/>
    </ligand>
</feature>
<feature type="binding site" evidence="1">
    <location>
        <position position="108"/>
    </location>
    <ligand>
        <name>NAD(+)</name>
        <dbReference type="ChEBI" id="CHEBI:57540"/>
    </ligand>
</feature>
<feature type="binding site" evidence="1">
    <location>
        <position position="131"/>
    </location>
    <ligand>
        <name>NAD(+)</name>
        <dbReference type="ChEBI" id="CHEBI:57540"/>
    </ligand>
</feature>
<feature type="binding site" evidence="1">
    <location>
        <position position="165"/>
    </location>
    <ligand>
        <name>NAD(+)</name>
        <dbReference type="ChEBI" id="CHEBI:57540"/>
    </ligand>
</feature>
<feature type="binding site" evidence="1">
    <location>
        <position position="304"/>
    </location>
    <ligand>
        <name>NAD(+)</name>
        <dbReference type="ChEBI" id="CHEBI:57540"/>
    </ligand>
</feature>
<feature type="binding site" evidence="1">
    <location>
        <position position="398"/>
    </location>
    <ligand>
        <name>Zn(2+)</name>
        <dbReference type="ChEBI" id="CHEBI:29105"/>
    </ligand>
</feature>
<feature type="binding site" evidence="1">
    <location>
        <position position="401"/>
    </location>
    <ligand>
        <name>Zn(2+)</name>
        <dbReference type="ChEBI" id="CHEBI:29105"/>
    </ligand>
</feature>
<feature type="binding site" evidence="1">
    <location>
        <position position="414"/>
    </location>
    <ligand>
        <name>Zn(2+)</name>
        <dbReference type="ChEBI" id="CHEBI:29105"/>
    </ligand>
</feature>
<feature type="binding site" evidence="1">
    <location>
        <position position="419"/>
    </location>
    <ligand>
        <name>Zn(2+)</name>
        <dbReference type="ChEBI" id="CHEBI:29105"/>
    </ligand>
</feature>
<proteinExistence type="inferred from homology"/>